<reference key="1">
    <citation type="journal article" date="1992" name="Biochim. Biophys. Acta">
        <title>Completion of the nucleotide sequence of the 'maltose B' region in Salmonella typhimurium: the high conservation of the malM gene suggests a selected physiological role for its product.</title>
        <authorList>
            <person name="Schneider E."/>
            <person name="Francoz E."/>
            <person name="Dassa E."/>
        </authorList>
    </citation>
    <scope>NUCLEOTIDE SEQUENCE [GENOMIC DNA]</scope>
    <source>
        <strain>LT2</strain>
    </source>
</reference>
<reference key="2">
    <citation type="journal article" date="2001" name="Nature">
        <title>Complete genome sequence of Salmonella enterica serovar Typhimurium LT2.</title>
        <authorList>
            <person name="McClelland M."/>
            <person name="Sanderson K.E."/>
            <person name="Spieth J."/>
            <person name="Clifton S.W."/>
            <person name="Latreille P."/>
            <person name="Courtney L."/>
            <person name="Porwollik S."/>
            <person name="Ali J."/>
            <person name="Dante M."/>
            <person name="Du F."/>
            <person name="Hou S."/>
            <person name="Layman D."/>
            <person name="Leonard S."/>
            <person name="Nguyen C."/>
            <person name="Scott K."/>
            <person name="Holmes A."/>
            <person name="Grewal N."/>
            <person name="Mulvaney E."/>
            <person name="Ryan E."/>
            <person name="Sun H."/>
            <person name="Florea L."/>
            <person name="Miller W."/>
            <person name="Stoneking T."/>
            <person name="Nhan M."/>
            <person name="Waterston R."/>
            <person name="Wilson R.K."/>
        </authorList>
    </citation>
    <scope>NUCLEOTIDE SEQUENCE [LARGE SCALE GENOMIC DNA]</scope>
    <source>
        <strain>LT2 / SGSC1412 / ATCC 700720</strain>
    </source>
</reference>
<accession>P26478</accession>
<evidence type="ECO:0000255" key="1"/>
<evidence type="ECO:0000305" key="2"/>
<feature type="signal peptide" description="Or 26" evidence="1">
    <location>
        <begin position="1"/>
        <end position="22"/>
    </location>
</feature>
<feature type="chain" id="PRO_0000021635" description="Maltose operon periplasmic protein">
    <location>
        <begin position="23"/>
        <end position="305"/>
    </location>
</feature>
<feature type="sequence conflict" description="In Ref. 1; CAA38186." evidence="2" ref="1">
    <original>A</original>
    <variation>P</variation>
    <location>
        <position position="74"/>
    </location>
</feature>
<proteinExistence type="inferred from homology"/>
<protein>
    <recommendedName>
        <fullName>Maltose operon periplasmic protein</fullName>
    </recommendedName>
</protein>
<name>MALM_SALTY</name>
<comment type="function">
    <text>Not yet known. Might function in the uptake of a still unidentified substrate.</text>
</comment>
<comment type="subcellular location">
    <subcellularLocation>
        <location>Periplasm</location>
    </subcellularLocation>
</comment>
<comment type="similarity">
    <text evidence="2">To E.coli MalM.</text>
</comment>
<organism>
    <name type="scientific">Salmonella typhimurium (strain LT2 / SGSC1412 / ATCC 700720)</name>
    <dbReference type="NCBI Taxonomy" id="99287"/>
    <lineage>
        <taxon>Bacteria</taxon>
        <taxon>Pseudomonadati</taxon>
        <taxon>Pseudomonadota</taxon>
        <taxon>Gammaproteobacteria</taxon>
        <taxon>Enterobacterales</taxon>
        <taxon>Enterobacteriaceae</taxon>
        <taxon>Salmonella</taxon>
    </lineage>
</organism>
<sequence length="305" mass="31823">MKMKKSLVALCLTAGLFASVPGISLAEVNYVPQNTSAAPVIPAAALQQLTWTPVDQSKTQSTQLATGGQRLDVAGITGPVAAYSVPANIGELTLTLTSEVNKQASVFAPNVLILDQNMTPSAFFPSSYFTYQQPGVMSADRLEGVMRLTPALGQQKLYVLVFTTEKDLQQTTTLLDPAKAYAKGVGNSIPDIPDPVARHTTDGVVKLKVKTNSSSSVLVGPLFGSSGTGPVTVGNTAAPVAAPAPVAPKKSEPMLNDTESYFNKAIKDAVAKGDVDKALKLLDEAERLGSTSARSTFISSVKGKG</sequence>
<gene>
    <name type="primary">malM</name>
    <name type="ordered locus">STM4232</name>
</gene>
<dbReference type="EMBL" id="X54292">
    <property type="protein sequence ID" value="CAA38186.1"/>
    <property type="molecule type" value="Genomic_DNA"/>
</dbReference>
<dbReference type="EMBL" id="AE006468">
    <property type="protein sequence ID" value="AAL23056.1"/>
    <property type="molecule type" value="Genomic_DNA"/>
</dbReference>
<dbReference type="PIR" id="S20600">
    <property type="entry name" value="S20600"/>
</dbReference>
<dbReference type="RefSeq" id="NP_463097.1">
    <property type="nucleotide sequence ID" value="NC_003197.2"/>
</dbReference>
<dbReference type="RefSeq" id="WP_000782504.1">
    <property type="nucleotide sequence ID" value="NC_003197.2"/>
</dbReference>
<dbReference type="SMR" id="P26478"/>
<dbReference type="STRING" id="99287.STM4232"/>
<dbReference type="PaxDb" id="99287-STM4232"/>
<dbReference type="GeneID" id="1255758"/>
<dbReference type="KEGG" id="stm:STM4232"/>
<dbReference type="PATRIC" id="fig|99287.12.peg.4452"/>
<dbReference type="HOGENOM" id="CLU_078779_1_0_6"/>
<dbReference type="OMA" id="PDPIAKH"/>
<dbReference type="PhylomeDB" id="P26478"/>
<dbReference type="BioCyc" id="SENT99287:STM4232-MONOMER"/>
<dbReference type="Proteomes" id="UP000001014">
    <property type="component" value="Chromosome"/>
</dbReference>
<dbReference type="GO" id="GO:0042597">
    <property type="term" value="C:periplasmic space"/>
    <property type="evidence" value="ECO:0007669"/>
    <property type="project" value="UniProtKB-SubCell"/>
</dbReference>
<dbReference type="GO" id="GO:0008643">
    <property type="term" value="P:carbohydrate transport"/>
    <property type="evidence" value="ECO:0007669"/>
    <property type="project" value="InterPro"/>
</dbReference>
<dbReference type="InterPro" id="IPR010794">
    <property type="entry name" value="MalM"/>
</dbReference>
<dbReference type="NCBIfam" id="NF007855">
    <property type="entry name" value="PRK10564.1"/>
    <property type="match status" value="1"/>
</dbReference>
<dbReference type="Pfam" id="PF07148">
    <property type="entry name" value="MalM"/>
    <property type="match status" value="1"/>
</dbReference>
<keyword id="KW-0574">Periplasm</keyword>
<keyword id="KW-1185">Reference proteome</keyword>
<keyword id="KW-0732">Signal</keyword>
<keyword id="KW-0762">Sugar transport</keyword>
<keyword id="KW-0813">Transport</keyword>